<protein>
    <recommendedName>
        <fullName evidence="1">Aspartate 1-decarboxylase</fullName>
        <ecNumber evidence="1">4.1.1.11</ecNumber>
    </recommendedName>
    <alternativeName>
        <fullName evidence="1">Aspartate alpha-decarboxylase</fullName>
    </alternativeName>
    <component>
        <recommendedName>
            <fullName evidence="1">Aspartate 1-decarboxylase beta chain</fullName>
        </recommendedName>
    </component>
    <component>
        <recommendedName>
            <fullName evidence="1">Aspartate 1-decarboxylase alpha chain</fullName>
        </recommendedName>
    </component>
</protein>
<sequence length="116" mass="12806">MQIHVVKSKIHRVKVTGADLDYIGSITIDEDLMEAASIIEGEKVQIVNNNNGERLETYVIPGLRNTGEITLNGAAARKVAKGDILIIIAYGIMELEEARNFKPSLVFPDEETNLLK</sequence>
<reference key="1">
    <citation type="journal article" date="2006" name="Environ. Microbiol.">
        <title>Whole genome analysis of the marine Bacteroidetes'Gramella forsetii' reveals adaptations to degradation of polymeric organic matter.</title>
        <authorList>
            <person name="Bauer M."/>
            <person name="Kube M."/>
            <person name="Teeling H."/>
            <person name="Richter M."/>
            <person name="Lombardot T."/>
            <person name="Allers E."/>
            <person name="Wuerdemann C.A."/>
            <person name="Quast C."/>
            <person name="Kuhl H."/>
            <person name="Knaust F."/>
            <person name="Woebken D."/>
            <person name="Bischof K."/>
            <person name="Mussmann M."/>
            <person name="Choudhuri J.V."/>
            <person name="Meyer F."/>
            <person name="Reinhardt R."/>
            <person name="Amann R.I."/>
            <person name="Gloeckner F.O."/>
        </authorList>
    </citation>
    <scope>NUCLEOTIDE SEQUENCE [LARGE SCALE GENOMIC DNA]</scope>
    <source>
        <strain>DSM 17595 / CGMCC 1.15422 / KT0803</strain>
    </source>
</reference>
<keyword id="KW-0068">Autocatalytic cleavage</keyword>
<keyword id="KW-0963">Cytoplasm</keyword>
<keyword id="KW-0210">Decarboxylase</keyword>
<keyword id="KW-0456">Lyase</keyword>
<keyword id="KW-0566">Pantothenate biosynthesis</keyword>
<keyword id="KW-0670">Pyruvate</keyword>
<keyword id="KW-0704">Schiff base</keyword>
<keyword id="KW-0865">Zymogen</keyword>
<evidence type="ECO:0000255" key="1">
    <source>
        <dbReference type="HAMAP-Rule" id="MF_00446"/>
    </source>
</evidence>
<accession>A0M786</accession>
<name>PAND_CHRFK</name>
<gene>
    <name evidence="1" type="primary">panD</name>
    <name type="ordered locus">GFO_3543</name>
</gene>
<feature type="chain" id="PRO_0000306991" description="Aspartate 1-decarboxylase beta chain" evidence="1">
    <location>
        <begin position="1"/>
        <end position="24"/>
    </location>
</feature>
<feature type="chain" id="PRO_0000306992" description="Aspartate 1-decarboxylase alpha chain" evidence="1">
    <location>
        <begin position="25"/>
        <end position="116"/>
    </location>
</feature>
<feature type="active site" description="Schiff-base intermediate with substrate; via pyruvic acid" evidence="1">
    <location>
        <position position="25"/>
    </location>
</feature>
<feature type="active site" description="Proton donor" evidence="1">
    <location>
        <position position="58"/>
    </location>
</feature>
<feature type="binding site" evidence="1">
    <location>
        <position position="57"/>
    </location>
    <ligand>
        <name>substrate</name>
    </ligand>
</feature>
<feature type="binding site" evidence="1">
    <location>
        <begin position="73"/>
        <end position="75"/>
    </location>
    <ligand>
        <name>substrate</name>
    </ligand>
</feature>
<feature type="modified residue" description="Pyruvic acid (Ser)" evidence="1">
    <location>
        <position position="25"/>
    </location>
</feature>
<organism>
    <name type="scientific">Christiangramia forsetii (strain DSM 17595 / CGMCC 1.15422 / KT0803)</name>
    <name type="common">Gramella forsetii</name>
    <dbReference type="NCBI Taxonomy" id="411154"/>
    <lineage>
        <taxon>Bacteria</taxon>
        <taxon>Pseudomonadati</taxon>
        <taxon>Bacteroidota</taxon>
        <taxon>Flavobacteriia</taxon>
        <taxon>Flavobacteriales</taxon>
        <taxon>Flavobacteriaceae</taxon>
        <taxon>Christiangramia</taxon>
    </lineage>
</organism>
<proteinExistence type="inferred from homology"/>
<comment type="function">
    <text evidence="1">Catalyzes the pyruvoyl-dependent decarboxylation of aspartate to produce beta-alanine.</text>
</comment>
<comment type="catalytic activity">
    <reaction evidence="1">
        <text>L-aspartate + H(+) = beta-alanine + CO2</text>
        <dbReference type="Rhea" id="RHEA:19497"/>
        <dbReference type="ChEBI" id="CHEBI:15378"/>
        <dbReference type="ChEBI" id="CHEBI:16526"/>
        <dbReference type="ChEBI" id="CHEBI:29991"/>
        <dbReference type="ChEBI" id="CHEBI:57966"/>
        <dbReference type="EC" id="4.1.1.11"/>
    </reaction>
</comment>
<comment type="cofactor">
    <cofactor evidence="1">
        <name>pyruvate</name>
        <dbReference type="ChEBI" id="CHEBI:15361"/>
    </cofactor>
    <text evidence="1">Binds 1 pyruvoyl group covalently per subunit.</text>
</comment>
<comment type="pathway">
    <text evidence="1">Cofactor biosynthesis; (R)-pantothenate biosynthesis; beta-alanine from L-aspartate: step 1/1.</text>
</comment>
<comment type="subunit">
    <text evidence="1">Heterooctamer of four alpha and four beta subunits.</text>
</comment>
<comment type="subcellular location">
    <subcellularLocation>
        <location evidence="1">Cytoplasm</location>
    </subcellularLocation>
</comment>
<comment type="PTM">
    <text evidence="1">Is synthesized initially as an inactive proenzyme, which is activated by self-cleavage at a specific serine bond to produce a beta-subunit with a hydroxyl group at its C-terminus and an alpha-subunit with a pyruvoyl group at its N-terminus.</text>
</comment>
<comment type="similarity">
    <text evidence="1">Belongs to the PanD family.</text>
</comment>
<dbReference type="EC" id="4.1.1.11" evidence="1"/>
<dbReference type="EMBL" id="CU207366">
    <property type="protein sequence ID" value="CAL68481.1"/>
    <property type="molecule type" value="Genomic_DNA"/>
</dbReference>
<dbReference type="RefSeq" id="WP_011711382.1">
    <property type="nucleotide sequence ID" value="NC_008571.1"/>
</dbReference>
<dbReference type="SMR" id="A0M786"/>
<dbReference type="STRING" id="411154.GFO_3543"/>
<dbReference type="KEGG" id="gfo:GFO_3543"/>
<dbReference type="eggNOG" id="COG0853">
    <property type="taxonomic scope" value="Bacteria"/>
</dbReference>
<dbReference type="HOGENOM" id="CLU_115305_2_0_10"/>
<dbReference type="OrthoDB" id="9803983at2"/>
<dbReference type="UniPathway" id="UPA00028">
    <property type="reaction ID" value="UER00002"/>
</dbReference>
<dbReference type="Proteomes" id="UP000000755">
    <property type="component" value="Chromosome"/>
</dbReference>
<dbReference type="GO" id="GO:0005829">
    <property type="term" value="C:cytosol"/>
    <property type="evidence" value="ECO:0007669"/>
    <property type="project" value="TreeGrafter"/>
</dbReference>
<dbReference type="GO" id="GO:0004068">
    <property type="term" value="F:aspartate 1-decarboxylase activity"/>
    <property type="evidence" value="ECO:0007669"/>
    <property type="project" value="UniProtKB-UniRule"/>
</dbReference>
<dbReference type="GO" id="GO:0006523">
    <property type="term" value="P:alanine biosynthetic process"/>
    <property type="evidence" value="ECO:0007669"/>
    <property type="project" value="InterPro"/>
</dbReference>
<dbReference type="GO" id="GO:0015940">
    <property type="term" value="P:pantothenate biosynthetic process"/>
    <property type="evidence" value="ECO:0007669"/>
    <property type="project" value="UniProtKB-UniRule"/>
</dbReference>
<dbReference type="CDD" id="cd06919">
    <property type="entry name" value="Asp_decarbox"/>
    <property type="match status" value="1"/>
</dbReference>
<dbReference type="Gene3D" id="2.40.40.20">
    <property type="match status" value="1"/>
</dbReference>
<dbReference type="HAMAP" id="MF_00446">
    <property type="entry name" value="PanD"/>
    <property type="match status" value="1"/>
</dbReference>
<dbReference type="InterPro" id="IPR009010">
    <property type="entry name" value="Asp_de-COase-like_dom_sf"/>
</dbReference>
<dbReference type="InterPro" id="IPR003190">
    <property type="entry name" value="Asp_decarbox"/>
</dbReference>
<dbReference type="NCBIfam" id="TIGR00223">
    <property type="entry name" value="panD"/>
    <property type="match status" value="1"/>
</dbReference>
<dbReference type="PANTHER" id="PTHR21012">
    <property type="entry name" value="ASPARTATE 1-DECARBOXYLASE"/>
    <property type="match status" value="1"/>
</dbReference>
<dbReference type="PANTHER" id="PTHR21012:SF0">
    <property type="entry name" value="ASPARTATE 1-DECARBOXYLASE"/>
    <property type="match status" value="1"/>
</dbReference>
<dbReference type="Pfam" id="PF02261">
    <property type="entry name" value="Asp_decarbox"/>
    <property type="match status" value="1"/>
</dbReference>
<dbReference type="PIRSF" id="PIRSF006246">
    <property type="entry name" value="Asp_decarbox"/>
    <property type="match status" value="1"/>
</dbReference>
<dbReference type="SUPFAM" id="SSF50692">
    <property type="entry name" value="ADC-like"/>
    <property type="match status" value="1"/>
</dbReference>